<reference key="1">
    <citation type="journal article" date="2004" name="Genome Res.">
        <title>The status, quality, and expansion of the NIH full-length cDNA project: the Mammalian Gene Collection (MGC).</title>
        <authorList>
            <consortium name="The MGC Project Team"/>
        </authorList>
    </citation>
    <scope>NUCLEOTIDE SEQUENCE [LARGE SCALE MRNA]</scope>
    <source>
        <tissue>Placenta</tissue>
    </source>
</reference>
<reference key="2">
    <citation type="journal article" date="2010" name="J. Biol. Chem.">
        <title>Identification of transmembrane protein 88 (TMEM88) as a dishevelled-binding protein.</title>
        <authorList>
            <person name="Lee H.J."/>
            <person name="Finkelstein D."/>
            <person name="Li X."/>
            <person name="Wu D."/>
            <person name="Shi D.L."/>
            <person name="Zheng J.J."/>
        </authorList>
    </citation>
    <scope>SUBCELLULAR LOCATION</scope>
    <scope>INTERACTION WITH DVL1</scope>
</reference>
<reference key="3">
    <citation type="journal article" date="2013" name="Development">
        <title>Transmembrane protein 88: a Wnt regulatory protein that specifies cardiomyocyte development.</title>
        <authorList>
            <person name="Palpant N.J."/>
            <person name="Pabon L."/>
            <person name="Rabinowitz J.S."/>
            <person name="Hadland B.K."/>
            <person name="Stoick-Cooper C.L."/>
            <person name="Paige S.L."/>
            <person name="Bernstein I.D."/>
            <person name="Moon R.T."/>
            <person name="Murry C.E."/>
        </authorList>
    </citation>
    <scope>FUNCTION</scope>
</reference>
<gene>
    <name type="primary">TMEM88</name>
    <name type="synonym">TMEM88A</name>
</gene>
<keyword id="KW-1003">Cell membrane</keyword>
<keyword id="KW-0217">Developmental protein</keyword>
<keyword id="KW-0472">Membrane</keyword>
<keyword id="KW-1267">Proteomics identification</keyword>
<keyword id="KW-1185">Reference proteome</keyword>
<keyword id="KW-0812">Transmembrane</keyword>
<keyword id="KW-1133">Transmembrane helix</keyword>
<keyword id="KW-0879">Wnt signaling pathway</keyword>
<feature type="chain" id="PRO_0000251707" description="Transmembrane protein 88">
    <location>
        <begin position="1"/>
        <end position="159"/>
    </location>
</feature>
<feature type="transmembrane region" description="Helical" evidence="1">
    <location>
        <begin position="43"/>
        <end position="63"/>
    </location>
</feature>
<feature type="transmembrane region" description="Helical" evidence="1">
    <location>
        <begin position="88"/>
        <end position="108"/>
    </location>
</feature>
<feature type="region of interest" description="Disordered" evidence="2">
    <location>
        <begin position="137"/>
        <end position="159"/>
    </location>
</feature>
<feature type="sequence variant" id="VAR_027702" description="In dbSNP:rs2270518.">
    <original>L</original>
    <variation>F</variation>
    <location>
        <position position="44"/>
    </location>
</feature>
<organism>
    <name type="scientific">Homo sapiens</name>
    <name type="common">Human</name>
    <dbReference type="NCBI Taxonomy" id="9606"/>
    <lineage>
        <taxon>Eukaryota</taxon>
        <taxon>Metazoa</taxon>
        <taxon>Chordata</taxon>
        <taxon>Craniata</taxon>
        <taxon>Vertebrata</taxon>
        <taxon>Euteleostomi</taxon>
        <taxon>Mammalia</taxon>
        <taxon>Eutheria</taxon>
        <taxon>Euarchontoglires</taxon>
        <taxon>Primates</taxon>
        <taxon>Haplorrhini</taxon>
        <taxon>Catarrhini</taxon>
        <taxon>Hominidae</taxon>
        <taxon>Homo</taxon>
    </lineage>
</organism>
<dbReference type="EMBL" id="BC057812">
    <property type="protein sequence ID" value="AAH57812.1"/>
    <property type="molecule type" value="mRNA"/>
</dbReference>
<dbReference type="CCDS" id="CCDS11121.1"/>
<dbReference type="RefSeq" id="NP_981956.1">
    <property type="nucleotide sequence ID" value="NM_203411.2"/>
</dbReference>
<dbReference type="SMR" id="Q6PEY1"/>
<dbReference type="BioGRID" id="124915">
    <property type="interactions" value="33"/>
</dbReference>
<dbReference type="FunCoup" id="Q6PEY1">
    <property type="interactions" value="135"/>
</dbReference>
<dbReference type="IntAct" id="Q6PEY1">
    <property type="interactions" value="18"/>
</dbReference>
<dbReference type="STRING" id="9606.ENSP00000301599"/>
<dbReference type="iPTMnet" id="Q6PEY1"/>
<dbReference type="PhosphoSitePlus" id="Q6PEY1"/>
<dbReference type="BioMuta" id="TMEM88"/>
<dbReference type="DMDM" id="74758328"/>
<dbReference type="jPOST" id="Q6PEY1"/>
<dbReference type="MassIVE" id="Q6PEY1"/>
<dbReference type="PaxDb" id="9606-ENSP00000301599"/>
<dbReference type="PeptideAtlas" id="Q6PEY1"/>
<dbReference type="ProteomicsDB" id="67088"/>
<dbReference type="Antibodypedia" id="58901">
    <property type="antibodies" value="41 antibodies from 17 providers"/>
</dbReference>
<dbReference type="DNASU" id="92162"/>
<dbReference type="Ensembl" id="ENST00000301599.7">
    <property type="protein sequence ID" value="ENSP00000301599.6"/>
    <property type="gene ID" value="ENSG00000167874.7"/>
</dbReference>
<dbReference type="GeneID" id="92162"/>
<dbReference type="KEGG" id="hsa:92162"/>
<dbReference type="MANE-Select" id="ENST00000301599.7">
    <property type="protein sequence ID" value="ENSP00000301599.6"/>
    <property type="RefSeq nucleotide sequence ID" value="NM_203411.2"/>
    <property type="RefSeq protein sequence ID" value="NP_981956.1"/>
</dbReference>
<dbReference type="UCSC" id="uc002giy.4">
    <property type="organism name" value="human"/>
</dbReference>
<dbReference type="AGR" id="HGNC:32371"/>
<dbReference type="CTD" id="92162"/>
<dbReference type="DisGeNET" id="92162"/>
<dbReference type="GeneCards" id="TMEM88"/>
<dbReference type="HGNC" id="HGNC:32371">
    <property type="gene designation" value="TMEM88"/>
</dbReference>
<dbReference type="HPA" id="ENSG00000167874">
    <property type="expression patterns" value="Tissue enhanced (heart)"/>
</dbReference>
<dbReference type="MIM" id="617813">
    <property type="type" value="gene"/>
</dbReference>
<dbReference type="neXtProt" id="NX_Q6PEY1"/>
<dbReference type="OpenTargets" id="ENSG00000167874"/>
<dbReference type="PharmGKB" id="PA142670741"/>
<dbReference type="VEuPathDB" id="HostDB:ENSG00000167874"/>
<dbReference type="eggNOG" id="ENOG502S52P">
    <property type="taxonomic scope" value="Eukaryota"/>
</dbReference>
<dbReference type="GeneTree" id="ENSGT00940000162021"/>
<dbReference type="HOGENOM" id="CLU_105667_1_0_1"/>
<dbReference type="InParanoid" id="Q6PEY1"/>
<dbReference type="OMA" id="CTAHFQD"/>
<dbReference type="OrthoDB" id="9948320at2759"/>
<dbReference type="PAN-GO" id="Q6PEY1">
    <property type="GO annotations" value="3 GO annotations based on evolutionary models"/>
</dbReference>
<dbReference type="PhylomeDB" id="Q6PEY1"/>
<dbReference type="TreeFam" id="TF332743"/>
<dbReference type="PathwayCommons" id="Q6PEY1"/>
<dbReference type="SignaLink" id="Q6PEY1"/>
<dbReference type="BioGRID-ORCS" id="92162">
    <property type="hits" value="6 hits in 1151 CRISPR screens"/>
</dbReference>
<dbReference type="GenomeRNAi" id="92162"/>
<dbReference type="Pharos" id="Q6PEY1">
    <property type="development level" value="Tbio"/>
</dbReference>
<dbReference type="PRO" id="PR:Q6PEY1"/>
<dbReference type="Proteomes" id="UP000005640">
    <property type="component" value="Chromosome 17"/>
</dbReference>
<dbReference type="RNAct" id="Q6PEY1">
    <property type="molecule type" value="protein"/>
</dbReference>
<dbReference type="Bgee" id="ENSG00000167874">
    <property type="expression patterns" value="Expressed in apex of heart and 96 other cell types or tissues"/>
</dbReference>
<dbReference type="ExpressionAtlas" id="Q6PEY1">
    <property type="expression patterns" value="baseline and differential"/>
</dbReference>
<dbReference type="GO" id="GO:0005829">
    <property type="term" value="C:cytosol"/>
    <property type="evidence" value="ECO:0000314"/>
    <property type="project" value="ParkinsonsUK-UCL"/>
</dbReference>
<dbReference type="GO" id="GO:0005886">
    <property type="term" value="C:plasma membrane"/>
    <property type="evidence" value="ECO:0000314"/>
    <property type="project" value="ParkinsonsUK-UCL"/>
</dbReference>
<dbReference type="GO" id="GO:0030165">
    <property type="term" value="F:PDZ domain binding"/>
    <property type="evidence" value="ECO:0000250"/>
    <property type="project" value="ParkinsonsUK-UCL"/>
</dbReference>
<dbReference type="GO" id="GO:0090090">
    <property type="term" value="P:negative regulation of canonical Wnt signaling pathway"/>
    <property type="evidence" value="ECO:0000314"/>
    <property type="project" value="ParkinsonsUK-UCL"/>
</dbReference>
<dbReference type="GO" id="GO:0072659">
    <property type="term" value="P:protein localization to plasma membrane"/>
    <property type="evidence" value="ECO:0000316"/>
    <property type="project" value="ParkinsonsUK-UCL"/>
</dbReference>
<dbReference type="GO" id="GO:0050821">
    <property type="term" value="P:protein stabilization"/>
    <property type="evidence" value="ECO:0000316"/>
    <property type="project" value="ParkinsonsUK-UCL"/>
</dbReference>
<dbReference type="GO" id="GO:0016055">
    <property type="term" value="P:Wnt signaling pathway"/>
    <property type="evidence" value="ECO:0007669"/>
    <property type="project" value="UniProtKB-KW"/>
</dbReference>
<dbReference type="InterPro" id="IPR033355">
    <property type="entry name" value="TMEM88"/>
</dbReference>
<dbReference type="PANTHER" id="PTHR28628:SF3">
    <property type="entry name" value="TRANSMEMBRANE PROTEIN 88"/>
    <property type="match status" value="1"/>
</dbReference>
<dbReference type="PANTHER" id="PTHR28628">
    <property type="entry name" value="TRANSMEMBRANE PROTEIN 88-RELATED"/>
    <property type="match status" value="1"/>
</dbReference>
<evidence type="ECO:0000255" key="1"/>
<evidence type="ECO:0000256" key="2">
    <source>
        <dbReference type="SAM" id="MobiDB-lite"/>
    </source>
</evidence>
<evidence type="ECO:0000269" key="3">
    <source>
    </source>
</evidence>
<evidence type="ECO:0000269" key="4">
    <source>
    </source>
</evidence>
<evidence type="ECO:0000305" key="5"/>
<comment type="function">
    <text evidence="4">Inhibits the Wnt/beta-catenin signaling pathway. Crucial for heart development and acts downstream of GATA factors in the pre-cardiac mesoderm to specify lineage commitment of cardiomyocyte development.</text>
</comment>
<comment type="subunit">
    <text evidence="3">Interacts (via C-terminus) with DVL1.</text>
</comment>
<comment type="interaction">
    <interactant intactId="EBI-17198826">
        <id>Q6PEY1</id>
    </interactant>
    <interactant intactId="EBI-12822627">
        <id>O14523</id>
        <label>C2CD2L</label>
    </interactant>
    <organismsDiffer>false</organismsDiffer>
    <experiments>3</experiments>
</comment>
<comment type="interaction">
    <interactant intactId="EBI-17198826">
        <id>Q6PEY1</id>
    </interactant>
    <interactant intactId="EBI-7797098">
        <id>P04921</id>
        <label>GYPC</label>
    </interactant>
    <organismsDiffer>false</organismsDiffer>
    <experiments>3</experiments>
</comment>
<comment type="interaction">
    <interactant intactId="EBI-17198826">
        <id>Q6PEY1</id>
    </interactant>
    <interactant intactId="EBI-11956541">
        <id>Q9GZY8-5</id>
        <label>MFF</label>
    </interactant>
    <organismsDiffer>false</organismsDiffer>
    <experiments>3</experiments>
</comment>
<comment type="interaction">
    <interactant intactId="EBI-17198826">
        <id>Q6PEY1</id>
    </interactant>
    <interactant intactId="EBI-3919611">
        <id>Q16617</id>
        <label>NKG7</label>
    </interactant>
    <organismsDiffer>false</organismsDiffer>
    <experiments>3</experiments>
</comment>
<comment type="interaction">
    <interactant intactId="EBI-17198826">
        <id>Q6PEY1</id>
    </interactant>
    <interactant intactId="EBI-1047996">
        <id>O14925</id>
        <label>TIMM23</label>
    </interactant>
    <organismsDiffer>false</organismsDiffer>
    <experiments>3</experiments>
</comment>
<comment type="interaction">
    <interactant intactId="EBI-17198826">
        <id>Q6PEY1</id>
    </interactant>
    <interactant intactId="EBI-723946">
        <id>P17152</id>
        <label>TMEM11</label>
    </interactant>
    <organismsDiffer>false</organismsDiffer>
    <experiments>3</experiments>
</comment>
<comment type="interaction">
    <interactant intactId="EBI-17198826">
        <id>Q6PEY1</id>
    </interactant>
    <interactant intactId="EBI-727322">
        <id>Q9BXJ8</id>
        <label>TMEM120A</label>
    </interactant>
    <organismsDiffer>false</organismsDiffer>
    <experiments>3</experiments>
</comment>
<comment type="interaction">
    <interactant intactId="EBI-17198826">
        <id>Q6PEY1</id>
    </interactant>
    <interactant intactId="EBI-10173151">
        <id>A2RU14</id>
        <label>TMEM218</label>
    </interactant>
    <organismsDiffer>false</organismsDiffer>
    <experiments>3</experiments>
</comment>
<comment type="interaction">
    <interactant intactId="EBI-17198826">
        <id>Q6PEY1</id>
    </interactant>
    <interactant intactId="EBI-12366453">
        <id>P56557</id>
        <label>TMEM50B</label>
    </interactant>
    <organismsDiffer>false</organismsDiffer>
    <experiments>3</experiments>
</comment>
<comment type="interaction">
    <interactant intactId="EBI-17198826">
        <id>Q6PEY1</id>
    </interactant>
    <interactant intactId="EBI-1207615">
        <id>Q86Y07</id>
        <label>VRK2</label>
    </interactant>
    <organismsDiffer>false</organismsDiffer>
    <experiments>3</experiments>
</comment>
<comment type="interaction">
    <interactant intactId="EBI-17198826">
        <id>Q6PEY1</id>
    </interactant>
    <interactant intactId="EBI-10268111">
        <id>Q8N966</id>
        <label>ZDHHC22</label>
    </interactant>
    <organismsDiffer>false</organismsDiffer>
    <experiments>3</experiments>
</comment>
<comment type="subcellular location">
    <subcellularLocation>
        <location evidence="3">Cell membrane</location>
        <topology evidence="3">Multi-pass membrane protein</topology>
    </subcellularLocation>
</comment>
<comment type="similarity">
    <text evidence="5">Belongs to the TMEM88 family.</text>
</comment>
<protein>
    <recommendedName>
        <fullName>Transmembrane protein 88</fullName>
    </recommendedName>
</protein>
<name>TMM88_HUMAN</name>
<proteinExistence type="evidence at protein level"/>
<accession>Q6PEY1</accession>
<sequence length="159" mass="17251">MADVPGAQRAVPGDGPEPRDPLDCWACAVLVTAQNLLVAAFNLLLLVLVLGTILLPAVTMLGFGFLCHSQFLRSQAPPCTAHLRDPGFTALLVTGFLLLVPLLVLALASYRRLCLRLRLADCLVPYSRALYRRRRAPQPRQIRASPGSQAVPTSGKVWV</sequence>